<proteinExistence type="evidence at transcript level"/>
<evidence type="ECO:0000250" key="1"/>
<evidence type="ECO:0000303" key="2">
    <source>
    </source>
</evidence>
<evidence type="ECO:0000305" key="3"/>
<evidence type="ECO:0000305" key="4">
    <source>
    </source>
</evidence>
<accession>D2Y498</accession>
<comment type="function">
    <text evidence="3">Probable neurotoxin with unknown target. Possibly targets ion channels.</text>
</comment>
<comment type="subcellular location">
    <subcellularLocation>
        <location evidence="4">Secreted</location>
    </subcellularLocation>
</comment>
<comment type="tissue specificity">
    <text evidence="4">Expressed by the venom duct.</text>
</comment>
<comment type="domain">
    <text evidence="1">The presence of a 'disulfide through disulfide knot' structurally defines this protein as a knottin.</text>
</comment>
<comment type="domain">
    <text>The cysteine framework is VI/VII (C-C-CC-C-C).</text>
</comment>
<comment type="similarity">
    <text evidence="3">Belongs to the conotoxin O1 superfamily.</text>
</comment>
<reference key="1">
    <citation type="journal article" date="2011" name="Toxicon">
        <title>Diversity of conotoxin types from Conus californicus reflects a diversity of prey types and a novel evolutionary history.</title>
        <authorList>
            <person name="Elliger C.A."/>
            <person name="Richmond T.A."/>
            <person name="Lebaric Z.N."/>
            <person name="Pierce N.T."/>
            <person name="Sweedler J.V."/>
            <person name="Gilly W.F."/>
        </authorList>
    </citation>
    <scope>NUCLEOTIDE SEQUENCE [MRNA]</scope>
    <source>
        <tissue>Venom duct</tissue>
    </source>
</reference>
<name>O16D_CONCL</name>
<dbReference type="EMBL" id="GU306163">
    <property type="protein sequence ID" value="ADB04241.1"/>
    <property type="molecule type" value="mRNA"/>
</dbReference>
<dbReference type="SMR" id="D2Y498"/>
<dbReference type="ConoServer" id="3972">
    <property type="toxin name" value="Cal6.1d precursor"/>
</dbReference>
<dbReference type="GO" id="GO:0005576">
    <property type="term" value="C:extracellular region"/>
    <property type="evidence" value="ECO:0007669"/>
    <property type="project" value="UniProtKB-SubCell"/>
</dbReference>
<dbReference type="GO" id="GO:0099106">
    <property type="term" value="F:ion channel regulator activity"/>
    <property type="evidence" value="ECO:0007669"/>
    <property type="project" value="UniProtKB-KW"/>
</dbReference>
<dbReference type="GO" id="GO:0090729">
    <property type="term" value="F:toxin activity"/>
    <property type="evidence" value="ECO:0007669"/>
    <property type="project" value="UniProtKB-KW"/>
</dbReference>
<feature type="propeptide" id="PRO_5000566320" evidence="4">
    <location>
        <begin position="1" status="less than"/>
        <end position="8"/>
    </location>
</feature>
<feature type="peptide" id="PRO_5000566321" description="Conotoxin Cal6.1d" evidence="4">
    <location>
        <begin position="9"/>
        <end position="35"/>
    </location>
</feature>
<feature type="disulfide bond" evidence="1">
    <location>
        <begin position="9"/>
        <end position="25"/>
    </location>
</feature>
<feature type="disulfide bond" evidence="1">
    <location>
        <begin position="16"/>
        <end position="29"/>
    </location>
</feature>
<feature type="disulfide bond" evidence="1">
    <location>
        <begin position="24"/>
        <end position="34"/>
    </location>
</feature>
<feature type="non-terminal residue">
    <location>
        <position position="1"/>
    </location>
</feature>
<sequence length="35" mass="3784">GLTRPSKRCLAGSAPCEFHRGYTCCSGHCLIWVCA</sequence>
<protein>
    <recommendedName>
        <fullName evidence="2">Conotoxin Cal6.1d</fullName>
    </recommendedName>
</protein>
<keyword id="KW-0165">Cleavage on pair of basic residues</keyword>
<keyword id="KW-1015">Disulfide bond</keyword>
<keyword id="KW-0872">Ion channel impairing toxin</keyword>
<keyword id="KW-0960">Knottin</keyword>
<keyword id="KW-0528">Neurotoxin</keyword>
<keyword id="KW-0964">Secreted</keyword>
<keyword id="KW-0800">Toxin</keyword>
<organism>
    <name type="scientific">Californiconus californicus</name>
    <name type="common">California cone</name>
    <name type="synonym">Conus californicus</name>
    <dbReference type="NCBI Taxonomy" id="1736779"/>
    <lineage>
        <taxon>Eukaryota</taxon>
        <taxon>Metazoa</taxon>
        <taxon>Spiralia</taxon>
        <taxon>Lophotrochozoa</taxon>
        <taxon>Mollusca</taxon>
        <taxon>Gastropoda</taxon>
        <taxon>Caenogastropoda</taxon>
        <taxon>Neogastropoda</taxon>
        <taxon>Conoidea</taxon>
        <taxon>Conidae</taxon>
        <taxon>Californiconus</taxon>
    </lineage>
</organism>